<dbReference type="EC" id="2.2.1.7" evidence="1"/>
<dbReference type="EMBL" id="CP000025">
    <property type="protein sequence ID" value="AAW34955.1"/>
    <property type="molecule type" value="Genomic_DNA"/>
</dbReference>
<dbReference type="RefSeq" id="WP_011049659.1">
    <property type="nucleotide sequence ID" value="NC_003912.7"/>
</dbReference>
<dbReference type="SMR" id="Q5HWF0"/>
<dbReference type="KEGG" id="cjr:CJE0366"/>
<dbReference type="HOGENOM" id="CLU_009227_1_4_7"/>
<dbReference type="UniPathway" id="UPA00064">
    <property type="reaction ID" value="UER00091"/>
</dbReference>
<dbReference type="GO" id="GO:0005829">
    <property type="term" value="C:cytosol"/>
    <property type="evidence" value="ECO:0007669"/>
    <property type="project" value="TreeGrafter"/>
</dbReference>
<dbReference type="GO" id="GO:0008661">
    <property type="term" value="F:1-deoxy-D-xylulose-5-phosphate synthase activity"/>
    <property type="evidence" value="ECO:0007669"/>
    <property type="project" value="UniProtKB-UniRule"/>
</dbReference>
<dbReference type="GO" id="GO:0000287">
    <property type="term" value="F:magnesium ion binding"/>
    <property type="evidence" value="ECO:0007669"/>
    <property type="project" value="UniProtKB-UniRule"/>
</dbReference>
<dbReference type="GO" id="GO:0030976">
    <property type="term" value="F:thiamine pyrophosphate binding"/>
    <property type="evidence" value="ECO:0007669"/>
    <property type="project" value="UniProtKB-UniRule"/>
</dbReference>
<dbReference type="GO" id="GO:0052865">
    <property type="term" value="P:1-deoxy-D-xylulose 5-phosphate biosynthetic process"/>
    <property type="evidence" value="ECO:0007669"/>
    <property type="project" value="UniProtKB-UniPathway"/>
</dbReference>
<dbReference type="GO" id="GO:0019288">
    <property type="term" value="P:isopentenyl diphosphate biosynthetic process, methylerythritol 4-phosphate pathway"/>
    <property type="evidence" value="ECO:0007669"/>
    <property type="project" value="TreeGrafter"/>
</dbReference>
<dbReference type="GO" id="GO:0016114">
    <property type="term" value="P:terpenoid biosynthetic process"/>
    <property type="evidence" value="ECO:0007669"/>
    <property type="project" value="UniProtKB-UniRule"/>
</dbReference>
<dbReference type="GO" id="GO:0009228">
    <property type="term" value="P:thiamine biosynthetic process"/>
    <property type="evidence" value="ECO:0007669"/>
    <property type="project" value="UniProtKB-UniRule"/>
</dbReference>
<dbReference type="CDD" id="cd02007">
    <property type="entry name" value="TPP_DXS"/>
    <property type="match status" value="1"/>
</dbReference>
<dbReference type="CDD" id="cd07033">
    <property type="entry name" value="TPP_PYR_DXS_TK_like"/>
    <property type="match status" value="1"/>
</dbReference>
<dbReference type="Gene3D" id="3.40.50.920">
    <property type="match status" value="1"/>
</dbReference>
<dbReference type="Gene3D" id="3.40.50.970">
    <property type="match status" value="2"/>
</dbReference>
<dbReference type="HAMAP" id="MF_00315">
    <property type="entry name" value="DXP_synth"/>
    <property type="match status" value="1"/>
</dbReference>
<dbReference type="InterPro" id="IPR005477">
    <property type="entry name" value="Dxylulose-5-P_synthase"/>
</dbReference>
<dbReference type="InterPro" id="IPR029061">
    <property type="entry name" value="THDP-binding"/>
</dbReference>
<dbReference type="InterPro" id="IPR009014">
    <property type="entry name" value="Transketo_C/PFOR_II"/>
</dbReference>
<dbReference type="InterPro" id="IPR005475">
    <property type="entry name" value="Transketolase-like_Pyr-bd"/>
</dbReference>
<dbReference type="InterPro" id="IPR020826">
    <property type="entry name" value="Transketolase_BS"/>
</dbReference>
<dbReference type="InterPro" id="IPR033248">
    <property type="entry name" value="Transketolase_C"/>
</dbReference>
<dbReference type="InterPro" id="IPR049557">
    <property type="entry name" value="Transketolase_CS"/>
</dbReference>
<dbReference type="NCBIfam" id="TIGR00204">
    <property type="entry name" value="dxs"/>
    <property type="match status" value="1"/>
</dbReference>
<dbReference type="NCBIfam" id="NF003933">
    <property type="entry name" value="PRK05444.2-2"/>
    <property type="match status" value="1"/>
</dbReference>
<dbReference type="PANTHER" id="PTHR43322">
    <property type="entry name" value="1-D-DEOXYXYLULOSE 5-PHOSPHATE SYNTHASE-RELATED"/>
    <property type="match status" value="1"/>
</dbReference>
<dbReference type="PANTHER" id="PTHR43322:SF5">
    <property type="entry name" value="1-DEOXY-D-XYLULOSE-5-PHOSPHATE SYNTHASE, CHLOROPLASTIC"/>
    <property type="match status" value="1"/>
</dbReference>
<dbReference type="Pfam" id="PF13292">
    <property type="entry name" value="DXP_synthase_N"/>
    <property type="match status" value="1"/>
</dbReference>
<dbReference type="Pfam" id="PF02779">
    <property type="entry name" value="Transket_pyr"/>
    <property type="match status" value="1"/>
</dbReference>
<dbReference type="Pfam" id="PF02780">
    <property type="entry name" value="Transketolase_C"/>
    <property type="match status" value="1"/>
</dbReference>
<dbReference type="SMART" id="SM00861">
    <property type="entry name" value="Transket_pyr"/>
    <property type="match status" value="1"/>
</dbReference>
<dbReference type="SUPFAM" id="SSF52518">
    <property type="entry name" value="Thiamin diphosphate-binding fold (THDP-binding)"/>
    <property type="match status" value="2"/>
</dbReference>
<dbReference type="SUPFAM" id="SSF52922">
    <property type="entry name" value="TK C-terminal domain-like"/>
    <property type="match status" value="1"/>
</dbReference>
<dbReference type="PROSITE" id="PS00801">
    <property type="entry name" value="TRANSKETOLASE_1"/>
    <property type="match status" value="1"/>
</dbReference>
<dbReference type="PROSITE" id="PS00802">
    <property type="entry name" value="TRANSKETOLASE_2"/>
    <property type="match status" value="1"/>
</dbReference>
<sequence>MSKKFVHTQEELEKLSLKELENLAASMREKIIQVVSKNGGHLSSNLGAVELSIAMHLVFDAKKDPFIFDVSHQSYTHKLLSGKEEIFDTLRQINGLSGYTKPSEGDYFVAGHSSTSISLAVGACKAIALKGEKRIPVALIGDGALSAGMAYEALNELGDSKFPCVILLNDNEMSISKPIGAISKYLSQAMATQFYQSFKKRIAKMLDILPDSATYMAKRFEESFKLITPGLLFEELGLEYIGPIDGHNLGEIISALKQAKAMQKPCVIHAQTIKGKGYVLAEGKHAKWHGVGAFDIDSGESVKKSDTKKSATEIFSKNLLDLASKYENIVGVTAAMPSGTGLDKLIEKYPNRFWDVAIAEQHAVTSMAAMAKEGFKPFIAIYSTFLQRAYDQVIHDCAIMNLNVVFAMDRAGIVGEDGETHQGVFDLSFLAPLPNFTLLAPRDEQMMQNIMEYAYLHQGPIAFRYPRGSFILDKEFNPCEIKLGKAQWLVKNSSEIAFLGYGQGVAKAWQVLRALQEMNNNANLIDLIFAKPLDEELLCELAKKSKIWFIFSENVKIGGIESLINNFLQKYDLHVKVVSFEYEDKFIEHGKTSEVEKNLEKDVNSLLTKVLKFYH</sequence>
<proteinExistence type="inferred from homology"/>
<reference key="1">
    <citation type="journal article" date="2005" name="PLoS Biol.">
        <title>Major structural differences and novel potential virulence mechanisms from the genomes of multiple Campylobacter species.</title>
        <authorList>
            <person name="Fouts D.E."/>
            <person name="Mongodin E.F."/>
            <person name="Mandrell R.E."/>
            <person name="Miller W.G."/>
            <person name="Rasko D.A."/>
            <person name="Ravel J."/>
            <person name="Brinkac L.M."/>
            <person name="DeBoy R.T."/>
            <person name="Parker C.T."/>
            <person name="Daugherty S.C."/>
            <person name="Dodson R.J."/>
            <person name="Durkin A.S."/>
            <person name="Madupu R."/>
            <person name="Sullivan S.A."/>
            <person name="Shetty J.U."/>
            <person name="Ayodeji M.A."/>
            <person name="Shvartsbeyn A."/>
            <person name="Schatz M.C."/>
            <person name="Badger J.H."/>
            <person name="Fraser C.M."/>
            <person name="Nelson K.E."/>
        </authorList>
    </citation>
    <scope>NUCLEOTIDE SEQUENCE [LARGE SCALE GENOMIC DNA]</scope>
    <source>
        <strain>RM1221</strain>
    </source>
</reference>
<keyword id="KW-0414">Isoprene biosynthesis</keyword>
<keyword id="KW-0460">Magnesium</keyword>
<keyword id="KW-0479">Metal-binding</keyword>
<keyword id="KW-0784">Thiamine biosynthesis</keyword>
<keyword id="KW-0786">Thiamine pyrophosphate</keyword>
<keyword id="KW-0808">Transferase</keyword>
<comment type="function">
    <text evidence="1">Catalyzes the acyloin condensation reaction between C atoms 2 and 3 of pyruvate and glyceraldehyde 3-phosphate to yield 1-deoxy-D-xylulose-5-phosphate (DXP).</text>
</comment>
<comment type="catalytic activity">
    <reaction evidence="1">
        <text>D-glyceraldehyde 3-phosphate + pyruvate + H(+) = 1-deoxy-D-xylulose 5-phosphate + CO2</text>
        <dbReference type="Rhea" id="RHEA:12605"/>
        <dbReference type="ChEBI" id="CHEBI:15361"/>
        <dbReference type="ChEBI" id="CHEBI:15378"/>
        <dbReference type="ChEBI" id="CHEBI:16526"/>
        <dbReference type="ChEBI" id="CHEBI:57792"/>
        <dbReference type="ChEBI" id="CHEBI:59776"/>
        <dbReference type="EC" id="2.2.1.7"/>
    </reaction>
</comment>
<comment type="cofactor">
    <cofactor evidence="1">
        <name>Mg(2+)</name>
        <dbReference type="ChEBI" id="CHEBI:18420"/>
    </cofactor>
    <text evidence="1">Binds 1 Mg(2+) ion per subunit.</text>
</comment>
<comment type="cofactor">
    <cofactor evidence="1">
        <name>thiamine diphosphate</name>
        <dbReference type="ChEBI" id="CHEBI:58937"/>
    </cofactor>
    <text evidence="1">Binds 1 thiamine pyrophosphate per subunit.</text>
</comment>
<comment type="pathway">
    <text evidence="1">Metabolic intermediate biosynthesis; 1-deoxy-D-xylulose 5-phosphate biosynthesis; 1-deoxy-D-xylulose 5-phosphate from D-glyceraldehyde 3-phosphate and pyruvate: step 1/1.</text>
</comment>
<comment type="subunit">
    <text evidence="1">Homodimer.</text>
</comment>
<comment type="similarity">
    <text evidence="1">Belongs to the transketolase family. DXPS subfamily.</text>
</comment>
<name>DXS_CAMJR</name>
<organism>
    <name type="scientific">Campylobacter jejuni (strain RM1221)</name>
    <dbReference type="NCBI Taxonomy" id="195099"/>
    <lineage>
        <taxon>Bacteria</taxon>
        <taxon>Pseudomonadati</taxon>
        <taxon>Campylobacterota</taxon>
        <taxon>Epsilonproteobacteria</taxon>
        <taxon>Campylobacterales</taxon>
        <taxon>Campylobacteraceae</taxon>
        <taxon>Campylobacter</taxon>
    </lineage>
</organism>
<evidence type="ECO:0000255" key="1">
    <source>
        <dbReference type="HAMAP-Rule" id="MF_00315"/>
    </source>
</evidence>
<feature type="chain" id="PRO_0000256394" description="1-deoxy-D-xylulose-5-phosphate synthase">
    <location>
        <begin position="1"/>
        <end position="615"/>
    </location>
</feature>
<feature type="binding site" evidence="1">
    <location>
        <position position="72"/>
    </location>
    <ligand>
        <name>thiamine diphosphate</name>
        <dbReference type="ChEBI" id="CHEBI:58937"/>
    </ligand>
</feature>
<feature type="binding site" evidence="1">
    <location>
        <begin position="111"/>
        <end position="113"/>
    </location>
    <ligand>
        <name>thiamine diphosphate</name>
        <dbReference type="ChEBI" id="CHEBI:58937"/>
    </ligand>
</feature>
<feature type="binding site" evidence="1">
    <location>
        <position position="142"/>
    </location>
    <ligand>
        <name>Mg(2+)</name>
        <dbReference type="ChEBI" id="CHEBI:18420"/>
    </ligand>
</feature>
<feature type="binding site" evidence="1">
    <location>
        <begin position="143"/>
        <end position="144"/>
    </location>
    <ligand>
        <name>thiamine diphosphate</name>
        <dbReference type="ChEBI" id="CHEBI:58937"/>
    </ligand>
</feature>
<feature type="binding site" evidence="1">
    <location>
        <position position="171"/>
    </location>
    <ligand>
        <name>Mg(2+)</name>
        <dbReference type="ChEBI" id="CHEBI:18420"/>
    </ligand>
</feature>
<feature type="binding site" evidence="1">
    <location>
        <position position="171"/>
    </location>
    <ligand>
        <name>thiamine diphosphate</name>
        <dbReference type="ChEBI" id="CHEBI:58937"/>
    </ligand>
</feature>
<feature type="binding site" evidence="1">
    <location>
        <position position="278"/>
    </location>
    <ligand>
        <name>thiamine diphosphate</name>
        <dbReference type="ChEBI" id="CHEBI:58937"/>
    </ligand>
</feature>
<feature type="binding site" evidence="1">
    <location>
        <position position="360"/>
    </location>
    <ligand>
        <name>thiamine diphosphate</name>
        <dbReference type="ChEBI" id="CHEBI:58937"/>
    </ligand>
</feature>
<protein>
    <recommendedName>
        <fullName evidence="1">1-deoxy-D-xylulose-5-phosphate synthase</fullName>
        <ecNumber evidence="1">2.2.1.7</ecNumber>
    </recommendedName>
    <alternativeName>
        <fullName evidence="1">1-deoxyxylulose-5-phosphate synthase</fullName>
        <shortName evidence="1">DXP synthase</shortName>
        <shortName evidence="1">DXPS</shortName>
    </alternativeName>
</protein>
<gene>
    <name evidence="1" type="primary">dxs</name>
    <name type="ordered locus">CJE0366</name>
</gene>
<accession>Q5HWF0</accession>